<organism>
    <name type="scientific">Streptococcus pneumoniae (strain Taiwan19F-14)</name>
    <dbReference type="NCBI Taxonomy" id="487213"/>
    <lineage>
        <taxon>Bacteria</taxon>
        <taxon>Bacillati</taxon>
        <taxon>Bacillota</taxon>
        <taxon>Bacilli</taxon>
        <taxon>Lactobacillales</taxon>
        <taxon>Streptococcaceae</taxon>
        <taxon>Streptococcus</taxon>
    </lineage>
</organism>
<feature type="chain" id="PRO_1000135630" description="Small ribosomal subunit protein uS7">
    <location>
        <begin position="1"/>
        <end position="156"/>
    </location>
</feature>
<reference key="1">
    <citation type="journal article" date="2010" name="Genome Biol.">
        <title>Structure and dynamics of the pan-genome of Streptococcus pneumoniae and closely related species.</title>
        <authorList>
            <person name="Donati C."/>
            <person name="Hiller N.L."/>
            <person name="Tettelin H."/>
            <person name="Muzzi A."/>
            <person name="Croucher N.J."/>
            <person name="Angiuoli S.V."/>
            <person name="Oggioni M."/>
            <person name="Dunning Hotopp J.C."/>
            <person name="Hu F.Z."/>
            <person name="Riley D.R."/>
            <person name="Covacci A."/>
            <person name="Mitchell T.J."/>
            <person name="Bentley S.D."/>
            <person name="Kilian M."/>
            <person name="Ehrlich G.D."/>
            <person name="Rappuoli R."/>
            <person name="Moxon E.R."/>
            <person name="Masignani V."/>
        </authorList>
    </citation>
    <scope>NUCLEOTIDE SEQUENCE [LARGE SCALE GENOMIC DNA]</scope>
    <source>
        <strain>Taiwan19F-14</strain>
    </source>
</reference>
<comment type="function">
    <text evidence="1">One of the primary rRNA binding proteins, it binds directly to 16S rRNA where it nucleates assembly of the head domain of the 30S subunit. Is located at the subunit interface close to the decoding center, probably blocks exit of the E-site tRNA.</text>
</comment>
<comment type="subunit">
    <text evidence="1">Part of the 30S ribosomal subunit. Contacts proteins S9 and S11.</text>
</comment>
<comment type="similarity">
    <text evidence="1">Belongs to the universal ribosomal protein uS7 family.</text>
</comment>
<proteinExistence type="inferred from homology"/>
<evidence type="ECO:0000255" key="1">
    <source>
        <dbReference type="HAMAP-Rule" id="MF_00480"/>
    </source>
</evidence>
<evidence type="ECO:0000305" key="2"/>
<keyword id="KW-0687">Ribonucleoprotein</keyword>
<keyword id="KW-0689">Ribosomal protein</keyword>
<keyword id="KW-0694">RNA-binding</keyword>
<keyword id="KW-0699">rRNA-binding</keyword>
<keyword id="KW-0820">tRNA-binding</keyword>
<sequence length="156" mass="17756">MSRKNRAPKRDVLPDPLYNSQLVTRLINRVMLDGKRGTAASIVYGAFEQIKEATGNDALEVFETAMENIMPVLEVRARRVGGSNYQVPVEVRPERRTTLGLRWLVTIARLRGEHTMQDRLAKEILDAANNTGAAVKKREDTHRMAEANRAFAHFRW</sequence>
<protein>
    <recommendedName>
        <fullName evidence="1">Small ribosomal subunit protein uS7</fullName>
    </recommendedName>
    <alternativeName>
        <fullName evidence="2">30S ribosomal protein S7</fullName>
    </alternativeName>
</protein>
<accession>C1CPE4</accession>
<name>RS7_STRZT</name>
<dbReference type="EMBL" id="CP000921">
    <property type="protein sequence ID" value="ACO24176.1"/>
    <property type="molecule type" value="Genomic_DNA"/>
</dbReference>
<dbReference type="RefSeq" id="WP_000087873.1">
    <property type="nucleotide sequence ID" value="NC_012469.1"/>
</dbReference>
<dbReference type="SMR" id="C1CPE4"/>
<dbReference type="GeneID" id="93738576"/>
<dbReference type="KEGG" id="snt:SPT_0317"/>
<dbReference type="HOGENOM" id="CLU_072226_1_1_9"/>
<dbReference type="GO" id="GO:0015935">
    <property type="term" value="C:small ribosomal subunit"/>
    <property type="evidence" value="ECO:0007669"/>
    <property type="project" value="InterPro"/>
</dbReference>
<dbReference type="GO" id="GO:0019843">
    <property type="term" value="F:rRNA binding"/>
    <property type="evidence" value="ECO:0007669"/>
    <property type="project" value="UniProtKB-UniRule"/>
</dbReference>
<dbReference type="GO" id="GO:0003735">
    <property type="term" value="F:structural constituent of ribosome"/>
    <property type="evidence" value="ECO:0007669"/>
    <property type="project" value="InterPro"/>
</dbReference>
<dbReference type="GO" id="GO:0000049">
    <property type="term" value="F:tRNA binding"/>
    <property type="evidence" value="ECO:0007669"/>
    <property type="project" value="UniProtKB-UniRule"/>
</dbReference>
<dbReference type="GO" id="GO:0006412">
    <property type="term" value="P:translation"/>
    <property type="evidence" value="ECO:0007669"/>
    <property type="project" value="UniProtKB-UniRule"/>
</dbReference>
<dbReference type="CDD" id="cd14869">
    <property type="entry name" value="uS7_Bacteria"/>
    <property type="match status" value="1"/>
</dbReference>
<dbReference type="FunFam" id="1.10.455.10:FF:000001">
    <property type="entry name" value="30S ribosomal protein S7"/>
    <property type="match status" value="1"/>
</dbReference>
<dbReference type="Gene3D" id="1.10.455.10">
    <property type="entry name" value="Ribosomal protein S7 domain"/>
    <property type="match status" value="1"/>
</dbReference>
<dbReference type="HAMAP" id="MF_00480_B">
    <property type="entry name" value="Ribosomal_uS7_B"/>
    <property type="match status" value="1"/>
</dbReference>
<dbReference type="InterPro" id="IPR000235">
    <property type="entry name" value="Ribosomal_uS7"/>
</dbReference>
<dbReference type="InterPro" id="IPR005717">
    <property type="entry name" value="Ribosomal_uS7_bac/org-type"/>
</dbReference>
<dbReference type="InterPro" id="IPR020606">
    <property type="entry name" value="Ribosomal_uS7_CS"/>
</dbReference>
<dbReference type="InterPro" id="IPR023798">
    <property type="entry name" value="Ribosomal_uS7_dom"/>
</dbReference>
<dbReference type="InterPro" id="IPR036823">
    <property type="entry name" value="Ribosomal_uS7_dom_sf"/>
</dbReference>
<dbReference type="NCBIfam" id="TIGR01029">
    <property type="entry name" value="rpsG_bact"/>
    <property type="match status" value="1"/>
</dbReference>
<dbReference type="PANTHER" id="PTHR11205">
    <property type="entry name" value="RIBOSOMAL PROTEIN S7"/>
    <property type="match status" value="1"/>
</dbReference>
<dbReference type="Pfam" id="PF00177">
    <property type="entry name" value="Ribosomal_S7"/>
    <property type="match status" value="1"/>
</dbReference>
<dbReference type="PIRSF" id="PIRSF002122">
    <property type="entry name" value="RPS7p_RPS7a_RPS5e_RPS7o"/>
    <property type="match status" value="1"/>
</dbReference>
<dbReference type="SUPFAM" id="SSF47973">
    <property type="entry name" value="Ribosomal protein S7"/>
    <property type="match status" value="1"/>
</dbReference>
<dbReference type="PROSITE" id="PS00052">
    <property type="entry name" value="RIBOSOMAL_S7"/>
    <property type="match status" value="1"/>
</dbReference>
<gene>
    <name evidence="1" type="primary">rpsG</name>
    <name type="ordered locus">SPT_0317</name>
</gene>